<organism>
    <name type="scientific">Exiguobacterium sp. (strain ATCC BAA-1283 / AT1b)</name>
    <dbReference type="NCBI Taxonomy" id="360911"/>
    <lineage>
        <taxon>Bacteria</taxon>
        <taxon>Bacillati</taxon>
        <taxon>Bacillota</taxon>
        <taxon>Bacilli</taxon>
        <taxon>Bacillales</taxon>
        <taxon>Bacillales Family XII. Incertae Sedis</taxon>
        <taxon>Exiguobacterium</taxon>
    </lineage>
</organism>
<comment type="function">
    <text evidence="1">Formation of pseudouridine at positions 38, 39 and 40 in the anticodon stem and loop of transfer RNAs.</text>
</comment>
<comment type="catalytic activity">
    <reaction evidence="1">
        <text>uridine(38/39/40) in tRNA = pseudouridine(38/39/40) in tRNA</text>
        <dbReference type="Rhea" id="RHEA:22376"/>
        <dbReference type="Rhea" id="RHEA-COMP:10085"/>
        <dbReference type="Rhea" id="RHEA-COMP:10087"/>
        <dbReference type="ChEBI" id="CHEBI:65314"/>
        <dbReference type="ChEBI" id="CHEBI:65315"/>
        <dbReference type="EC" id="5.4.99.12"/>
    </reaction>
</comment>
<comment type="subunit">
    <text evidence="1">Homodimer.</text>
</comment>
<comment type="similarity">
    <text evidence="1">Belongs to the tRNA pseudouridine synthase TruA family.</text>
</comment>
<gene>
    <name evidence="1" type="primary">truA</name>
    <name type="ordered locus">EAT1b_1601</name>
</gene>
<proteinExistence type="inferred from homology"/>
<keyword id="KW-0413">Isomerase</keyword>
<keyword id="KW-0819">tRNA processing</keyword>
<name>TRUA_EXISA</name>
<reference key="1">
    <citation type="journal article" date="2011" name="J. Bacteriol.">
        <title>Complete genome sequence of the Thermophilic Bacterium Exiguobacterium sp. AT1b.</title>
        <authorList>
            <person name="Vishnivetskaya T.A."/>
            <person name="Lucas S."/>
            <person name="Copeland A."/>
            <person name="Lapidus A."/>
            <person name="Glavina del Rio T."/>
            <person name="Dalin E."/>
            <person name="Tice H."/>
            <person name="Bruce D.C."/>
            <person name="Goodwin L.A."/>
            <person name="Pitluck S."/>
            <person name="Saunders E."/>
            <person name="Brettin T."/>
            <person name="Detter C."/>
            <person name="Han C."/>
            <person name="Larimer F."/>
            <person name="Land M.L."/>
            <person name="Hauser L.J."/>
            <person name="Kyrpides N.C."/>
            <person name="Ovchinnikova G."/>
            <person name="Kathariou S."/>
            <person name="Ramaley R.F."/>
            <person name="Rodrigues D.F."/>
            <person name="Hendrix C."/>
            <person name="Richardson P."/>
            <person name="Tiedje J.M."/>
        </authorList>
    </citation>
    <scope>NUCLEOTIDE SEQUENCE [LARGE SCALE GENOMIC DNA]</scope>
    <source>
        <strain>ATCC BAA-1283 / AT1b</strain>
    </source>
</reference>
<dbReference type="EC" id="5.4.99.12" evidence="1"/>
<dbReference type="EMBL" id="CP001615">
    <property type="protein sequence ID" value="ACQ70527.1"/>
    <property type="molecule type" value="Genomic_DNA"/>
</dbReference>
<dbReference type="RefSeq" id="WP_012727646.1">
    <property type="nucleotide sequence ID" value="NC_012673.1"/>
</dbReference>
<dbReference type="SMR" id="C4KZL4"/>
<dbReference type="STRING" id="360911.EAT1b_1601"/>
<dbReference type="KEGG" id="eat:EAT1b_1601"/>
<dbReference type="eggNOG" id="COG0101">
    <property type="taxonomic scope" value="Bacteria"/>
</dbReference>
<dbReference type="HOGENOM" id="CLU_014673_0_1_9"/>
<dbReference type="OrthoDB" id="9811823at2"/>
<dbReference type="Proteomes" id="UP000000716">
    <property type="component" value="Chromosome"/>
</dbReference>
<dbReference type="GO" id="GO:0003723">
    <property type="term" value="F:RNA binding"/>
    <property type="evidence" value="ECO:0007669"/>
    <property type="project" value="InterPro"/>
</dbReference>
<dbReference type="GO" id="GO:0160147">
    <property type="term" value="F:tRNA pseudouridine(38-40) synthase activity"/>
    <property type="evidence" value="ECO:0007669"/>
    <property type="project" value="UniProtKB-EC"/>
</dbReference>
<dbReference type="GO" id="GO:0031119">
    <property type="term" value="P:tRNA pseudouridine synthesis"/>
    <property type="evidence" value="ECO:0007669"/>
    <property type="project" value="UniProtKB-UniRule"/>
</dbReference>
<dbReference type="CDD" id="cd02570">
    <property type="entry name" value="PseudoU_synth_EcTruA"/>
    <property type="match status" value="1"/>
</dbReference>
<dbReference type="FunFam" id="3.30.70.580:FF:000001">
    <property type="entry name" value="tRNA pseudouridine synthase A"/>
    <property type="match status" value="1"/>
</dbReference>
<dbReference type="Gene3D" id="3.30.70.660">
    <property type="entry name" value="Pseudouridine synthase I, catalytic domain, C-terminal subdomain"/>
    <property type="match status" value="1"/>
</dbReference>
<dbReference type="Gene3D" id="3.30.70.580">
    <property type="entry name" value="Pseudouridine synthase I, catalytic domain, N-terminal subdomain"/>
    <property type="match status" value="1"/>
</dbReference>
<dbReference type="HAMAP" id="MF_00171">
    <property type="entry name" value="TruA"/>
    <property type="match status" value="1"/>
</dbReference>
<dbReference type="InterPro" id="IPR020103">
    <property type="entry name" value="PsdUridine_synth_cat_dom_sf"/>
</dbReference>
<dbReference type="InterPro" id="IPR001406">
    <property type="entry name" value="PsdUridine_synth_TruA"/>
</dbReference>
<dbReference type="InterPro" id="IPR020097">
    <property type="entry name" value="PsdUridine_synth_TruA_a/b_dom"/>
</dbReference>
<dbReference type="InterPro" id="IPR020095">
    <property type="entry name" value="PsdUridine_synth_TruA_C"/>
</dbReference>
<dbReference type="InterPro" id="IPR020094">
    <property type="entry name" value="TruA/RsuA/RluB/E/F_N"/>
</dbReference>
<dbReference type="NCBIfam" id="TIGR00071">
    <property type="entry name" value="hisT_truA"/>
    <property type="match status" value="1"/>
</dbReference>
<dbReference type="PANTHER" id="PTHR11142">
    <property type="entry name" value="PSEUDOURIDYLATE SYNTHASE"/>
    <property type="match status" value="1"/>
</dbReference>
<dbReference type="PANTHER" id="PTHR11142:SF0">
    <property type="entry name" value="TRNA PSEUDOURIDINE SYNTHASE-LIKE 1"/>
    <property type="match status" value="1"/>
</dbReference>
<dbReference type="Pfam" id="PF01416">
    <property type="entry name" value="PseudoU_synth_1"/>
    <property type="match status" value="2"/>
</dbReference>
<dbReference type="PIRSF" id="PIRSF001430">
    <property type="entry name" value="tRNA_psdUrid_synth"/>
    <property type="match status" value="1"/>
</dbReference>
<dbReference type="SUPFAM" id="SSF55120">
    <property type="entry name" value="Pseudouridine synthase"/>
    <property type="match status" value="1"/>
</dbReference>
<accession>C4KZL4</accession>
<protein>
    <recommendedName>
        <fullName evidence="1">tRNA pseudouridine synthase A</fullName>
        <ecNumber evidence="1">5.4.99.12</ecNumber>
    </recommendedName>
    <alternativeName>
        <fullName evidence="1">tRNA pseudouridine(38-40) synthase</fullName>
    </alternativeName>
    <alternativeName>
        <fullName evidence="1">tRNA pseudouridylate synthase I</fullName>
    </alternativeName>
    <alternativeName>
        <fullName evidence="1">tRNA-uridine isomerase I</fullName>
    </alternativeName>
</protein>
<sequence length="246" mass="28320">MRRIKLIVAYDGTHYAGYQVQPNGNTIQAEIESVLARMHRHPVKIIASGRTDARVHALGQVIHFDTTLEMPAERFVKALNAMLPDDILVKQAEEMDDTFHARYGAKRKEYRYHIRQTEDPFRRHYAATVTYKLSLEAMRQAMERLIGTHDFTSFSVTKAEVEDRVRTIYEAEVLEMGDEIIFRFVGSGFLYNQVRIMVGTVIEVGRGKYQPADITQMLEAKDRRVAGITAPPHGLYLWNVNYEKVD</sequence>
<evidence type="ECO:0000255" key="1">
    <source>
        <dbReference type="HAMAP-Rule" id="MF_00171"/>
    </source>
</evidence>
<feature type="chain" id="PRO_1000203691" description="tRNA pseudouridine synthase A">
    <location>
        <begin position="1"/>
        <end position="246"/>
    </location>
</feature>
<feature type="active site" description="Nucleophile" evidence="1">
    <location>
        <position position="52"/>
    </location>
</feature>
<feature type="binding site" evidence="1">
    <location>
        <position position="110"/>
    </location>
    <ligand>
        <name>substrate</name>
    </ligand>
</feature>